<protein>
    <recommendedName>
        <fullName evidence="1">HTH-type transcriptional regulator IscR</fullName>
    </recommendedName>
</protein>
<organism>
    <name type="scientific">Erwinia tasmaniensis (strain DSM 17950 / CFBP 7177 / CIP 109463 / NCPPB 4357 / Et1/99)</name>
    <dbReference type="NCBI Taxonomy" id="465817"/>
    <lineage>
        <taxon>Bacteria</taxon>
        <taxon>Pseudomonadati</taxon>
        <taxon>Pseudomonadota</taxon>
        <taxon>Gammaproteobacteria</taxon>
        <taxon>Enterobacterales</taxon>
        <taxon>Erwiniaceae</taxon>
        <taxon>Erwinia</taxon>
    </lineage>
</organism>
<comment type="function">
    <text evidence="1">Regulates the transcription of several operons and genes involved in the biogenesis of Fe-S clusters and Fe-S-containing proteins.</text>
</comment>
<comment type="cofactor">
    <cofactor evidence="1">
        <name>[2Fe-2S] cluster</name>
        <dbReference type="ChEBI" id="CHEBI:190135"/>
    </cofactor>
    <text evidence="1">Binds 1 [2Fe-2S] cluster.</text>
</comment>
<proteinExistence type="inferred from homology"/>
<sequence length="165" mass="17944">MRLTSKGRYAVTAMLDVALHSHEGPVPLADISERQGISLSYLEQLFSRLRKNGLVASVRGPGGGYLLGKAADAIAVGAVITAVDESVDATKCQGKEGCQGGERCLTHVLWRDLSERISDFLNNITLAELVNNQEILVVADRQNSNEIRRAPHGRMHETINVNLRA</sequence>
<dbReference type="EMBL" id="CU468135">
    <property type="protein sequence ID" value="CAO96065.1"/>
    <property type="molecule type" value="Genomic_DNA"/>
</dbReference>
<dbReference type="RefSeq" id="WP_012440765.1">
    <property type="nucleotide sequence ID" value="NC_010694.1"/>
</dbReference>
<dbReference type="SMR" id="B2VI31"/>
<dbReference type="STRING" id="465817.ETA_10190"/>
<dbReference type="KEGG" id="eta:ETA_10190"/>
<dbReference type="eggNOG" id="COG1959">
    <property type="taxonomic scope" value="Bacteria"/>
</dbReference>
<dbReference type="HOGENOM" id="CLU_107144_0_0_6"/>
<dbReference type="OrthoDB" id="9808360at2"/>
<dbReference type="Proteomes" id="UP000001726">
    <property type="component" value="Chromosome"/>
</dbReference>
<dbReference type="GO" id="GO:0005829">
    <property type="term" value="C:cytosol"/>
    <property type="evidence" value="ECO:0007669"/>
    <property type="project" value="TreeGrafter"/>
</dbReference>
<dbReference type="GO" id="GO:0051537">
    <property type="term" value="F:2 iron, 2 sulfur cluster binding"/>
    <property type="evidence" value="ECO:0007669"/>
    <property type="project" value="UniProtKB-KW"/>
</dbReference>
<dbReference type="GO" id="GO:0003700">
    <property type="term" value="F:DNA-binding transcription factor activity"/>
    <property type="evidence" value="ECO:0007669"/>
    <property type="project" value="UniProtKB-UniRule"/>
</dbReference>
<dbReference type="GO" id="GO:0003690">
    <property type="term" value="F:double-stranded DNA binding"/>
    <property type="evidence" value="ECO:0007669"/>
    <property type="project" value="UniProtKB-UniRule"/>
</dbReference>
<dbReference type="GO" id="GO:0005506">
    <property type="term" value="F:iron ion binding"/>
    <property type="evidence" value="ECO:0007669"/>
    <property type="project" value="UniProtKB-UniRule"/>
</dbReference>
<dbReference type="FunFam" id="1.10.10.10:FF:000026">
    <property type="entry name" value="HTH-type transcriptional regulator IscR"/>
    <property type="match status" value="1"/>
</dbReference>
<dbReference type="Gene3D" id="1.10.10.10">
    <property type="entry name" value="Winged helix-like DNA-binding domain superfamily/Winged helix DNA-binding domain"/>
    <property type="match status" value="1"/>
</dbReference>
<dbReference type="HAMAP" id="MF_01176">
    <property type="entry name" value="HTH_type_IscR"/>
    <property type="match status" value="1"/>
</dbReference>
<dbReference type="InterPro" id="IPR010242">
    <property type="entry name" value="TF_HTH_IscR"/>
</dbReference>
<dbReference type="InterPro" id="IPR030489">
    <property type="entry name" value="TR_Rrf2-type_CS"/>
</dbReference>
<dbReference type="InterPro" id="IPR000944">
    <property type="entry name" value="Tscrpt_reg_Rrf2"/>
</dbReference>
<dbReference type="InterPro" id="IPR036388">
    <property type="entry name" value="WH-like_DNA-bd_sf"/>
</dbReference>
<dbReference type="InterPro" id="IPR036390">
    <property type="entry name" value="WH_DNA-bd_sf"/>
</dbReference>
<dbReference type="NCBIfam" id="TIGR02010">
    <property type="entry name" value="IscR"/>
    <property type="match status" value="1"/>
</dbReference>
<dbReference type="NCBIfam" id="NF008110">
    <property type="entry name" value="PRK10857.1"/>
    <property type="match status" value="1"/>
</dbReference>
<dbReference type="NCBIfam" id="TIGR00738">
    <property type="entry name" value="rrf2_super"/>
    <property type="match status" value="1"/>
</dbReference>
<dbReference type="PANTHER" id="PTHR33221:SF5">
    <property type="entry name" value="HTH-TYPE TRANSCRIPTIONAL REGULATOR ISCR"/>
    <property type="match status" value="1"/>
</dbReference>
<dbReference type="PANTHER" id="PTHR33221">
    <property type="entry name" value="WINGED HELIX-TURN-HELIX TRANSCRIPTIONAL REGULATOR, RRF2 FAMILY"/>
    <property type="match status" value="1"/>
</dbReference>
<dbReference type="Pfam" id="PF02082">
    <property type="entry name" value="Rrf2"/>
    <property type="match status" value="1"/>
</dbReference>
<dbReference type="SUPFAM" id="SSF46785">
    <property type="entry name" value="Winged helix' DNA-binding domain"/>
    <property type="match status" value="1"/>
</dbReference>
<dbReference type="PROSITE" id="PS01332">
    <property type="entry name" value="HTH_RRF2_1"/>
    <property type="match status" value="1"/>
</dbReference>
<dbReference type="PROSITE" id="PS51197">
    <property type="entry name" value="HTH_RRF2_2"/>
    <property type="match status" value="1"/>
</dbReference>
<accession>B2VI31</accession>
<evidence type="ECO:0000255" key="1">
    <source>
        <dbReference type="HAMAP-Rule" id="MF_01176"/>
    </source>
</evidence>
<keyword id="KW-0001">2Fe-2S</keyword>
<keyword id="KW-0010">Activator</keyword>
<keyword id="KW-0238">DNA-binding</keyword>
<keyword id="KW-0408">Iron</keyword>
<keyword id="KW-0411">Iron-sulfur</keyword>
<keyword id="KW-0479">Metal-binding</keyword>
<keyword id="KW-1185">Reference proteome</keyword>
<keyword id="KW-0678">Repressor</keyword>
<keyword id="KW-0804">Transcription</keyword>
<keyword id="KW-0805">Transcription regulation</keyword>
<name>ISCR_ERWT9</name>
<gene>
    <name evidence="1" type="primary">iscR</name>
    <name type="ordered locus">ETA_10190</name>
</gene>
<reference key="1">
    <citation type="journal article" date="2008" name="Environ. Microbiol.">
        <title>The genome of Erwinia tasmaniensis strain Et1/99, a non-pathogenic bacterium in the genus Erwinia.</title>
        <authorList>
            <person name="Kube M."/>
            <person name="Migdoll A.M."/>
            <person name="Mueller I."/>
            <person name="Kuhl H."/>
            <person name="Beck A."/>
            <person name="Reinhardt R."/>
            <person name="Geider K."/>
        </authorList>
    </citation>
    <scope>NUCLEOTIDE SEQUENCE [LARGE SCALE GENOMIC DNA]</scope>
    <source>
        <strain>DSM 17950 / CFBP 7177 / CIP 109463 / NCPPB 4357 / Et1/99</strain>
    </source>
</reference>
<feature type="chain" id="PRO_1000138101" description="HTH-type transcriptional regulator IscR">
    <location>
        <begin position="1"/>
        <end position="165"/>
    </location>
</feature>
<feature type="domain" description="HTH rrf2-type" evidence="1">
    <location>
        <begin position="2"/>
        <end position="131"/>
    </location>
</feature>
<feature type="DNA-binding region" description="H-T-H motif" evidence="1">
    <location>
        <begin position="28"/>
        <end position="51"/>
    </location>
</feature>
<feature type="binding site" evidence="1">
    <location>
        <position position="92"/>
    </location>
    <ligand>
        <name>[2Fe-2S] cluster</name>
        <dbReference type="ChEBI" id="CHEBI:190135"/>
    </ligand>
</feature>
<feature type="binding site" evidence="1">
    <location>
        <position position="98"/>
    </location>
    <ligand>
        <name>[2Fe-2S] cluster</name>
        <dbReference type="ChEBI" id="CHEBI:190135"/>
    </ligand>
</feature>
<feature type="binding site" evidence="1">
    <location>
        <position position="104"/>
    </location>
    <ligand>
        <name>[2Fe-2S] cluster</name>
        <dbReference type="ChEBI" id="CHEBI:190135"/>
    </ligand>
</feature>